<name>DYHC1_RAT</name>
<reference key="1">
    <citation type="journal article" date="1993" name="Proc. Natl. Acad. Sci. U.S.A.">
        <title>The primary structure of rat brain (cytoplasmic) dynein heavy chain, a cytoplasmic motor enzyme.</title>
        <authorList>
            <person name="Zhang Z."/>
            <person name="Tanaka Y."/>
            <person name="Nonaka S."/>
            <person name="Aizawa H."/>
            <person name="Kawasaki H."/>
            <person name="Nakata T."/>
            <person name="Hirokawa N."/>
        </authorList>
    </citation>
    <scope>NUCLEOTIDE SEQUENCE [MRNA]</scope>
    <source>
        <strain>Wistar</strain>
        <tissue>Brain</tissue>
    </source>
</reference>
<reference key="2">
    <citation type="journal article" date="1993" name="Neuron">
        <title>Molecular cloning of the retrograde transport motor cytoplasmic dynein (MAP 1C).</title>
        <authorList>
            <person name="Mikami A."/>
            <person name="Paschal B.M."/>
            <person name="Mazumdar M."/>
            <person name="Vallee R.B."/>
        </authorList>
    </citation>
    <scope>NUCLEOTIDE SEQUENCE [MRNA]</scope>
    <source>
        <strain>Sprague-Dawley</strain>
        <tissue>Brain</tissue>
    </source>
</reference>
<reference key="3">
    <citation type="journal article" date="1990" name="J. Biol. Chem.">
        <title>HMW-2, the Sertoli cell cytoplasmic dynein from rat testis, is a dimer composed of nearly identical subunits.</title>
        <authorList>
            <person name="Neely M.D."/>
            <person name="Erickson H.P."/>
            <person name="Boekelheide K."/>
        </authorList>
    </citation>
    <scope>SUBUNIT</scope>
</reference>
<reference key="4">
    <citation type="journal article" date="2000" name="J. Biol. Chem.">
        <title>Distinct but overlapping sites within the cytoplasmic dynein heavy chain for dimerization and for intermediate chain and light intermediate chain binding.</title>
        <authorList>
            <person name="Tynan S.H."/>
            <person name="Gee M.A."/>
            <person name="Vallee R.B."/>
        </authorList>
    </citation>
    <scope>INTERACTION WITH DYNC1LI1; DYNC1LI2 AND DYNC1I2</scope>
</reference>
<protein>
    <recommendedName>
        <fullName>Cytoplasmic dynein 1 heavy chain 1</fullName>
    </recommendedName>
    <alternativeName>
        <fullName>Cytoplasmic dynein heavy chain 1</fullName>
    </alternativeName>
    <alternativeName>
        <fullName>Dynein heavy chain, cytosolic</fullName>
    </alternativeName>
    <alternativeName>
        <fullName>MAP 1C</fullName>
    </alternativeName>
</protein>
<dbReference type="EMBL" id="D13896">
    <property type="protein sequence ID" value="BAA02996.1"/>
    <property type="molecule type" value="mRNA"/>
</dbReference>
<dbReference type="EMBL" id="L08505">
    <property type="protein sequence ID" value="AAA41103.1"/>
    <property type="molecule type" value="mRNA"/>
</dbReference>
<dbReference type="PIR" id="A38905">
    <property type="entry name" value="A38905"/>
</dbReference>
<dbReference type="RefSeq" id="NP_062099.3">
    <property type="nucleotide sequence ID" value="NM_019226.3"/>
</dbReference>
<dbReference type="BMRB" id="P38650"/>
<dbReference type="SMR" id="P38650"/>
<dbReference type="BioGRID" id="248131">
    <property type="interactions" value="14"/>
</dbReference>
<dbReference type="CORUM" id="P38650"/>
<dbReference type="FunCoup" id="P38650">
    <property type="interactions" value="3079"/>
</dbReference>
<dbReference type="IntAct" id="P38650">
    <property type="interactions" value="9"/>
</dbReference>
<dbReference type="MINT" id="P38650"/>
<dbReference type="STRING" id="10116.ENSRNOP00000066312"/>
<dbReference type="BindingDB" id="P38650"/>
<dbReference type="ChEMBL" id="CHEMBL3694"/>
<dbReference type="GlyGen" id="P38650">
    <property type="glycosylation" value="2 sites, 1 O-linked glycan (1 site)"/>
</dbReference>
<dbReference type="PhosphoSitePlus" id="P38650"/>
<dbReference type="SwissPalm" id="P38650"/>
<dbReference type="jPOST" id="P38650"/>
<dbReference type="PaxDb" id="10116-ENSRNOP00000066312"/>
<dbReference type="GeneID" id="29489"/>
<dbReference type="KEGG" id="rno:29489"/>
<dbReference type="UCSC" id="RGD:2511">
    <property type="organism name" value="rat"/>
</dbReference>
<dbReference type="AGR" id="RGD:2511"/>
<dbReference type="CTD" id="1778"/>
<dbReference type="RGD" id="2511">
    <property type="gene designation" value="Dync1h1"/>
</dbReference>
<dbReference type="eggNOG" id="KOG3595">
    <property type="taxonomic scope" value="Eukaryota"/>
</dbReference>
<dbReference type="InParanoid" id="P38650"/>
<dbReference type="OrthoDB" id="13313at9989"/>
<dbReference type="PhylomeDB" id="P38650"/>
<dbReference type="Reactome" id="R-RNO-141444">
    <property type="pathway name" value="Amplification of signal from unattached kinetochores via a MAD2 inhibitory signal"/>
</dbReference>
<dbReference type="Reactome" id="R-RNO-2132295">
    <property type="pathway name" value="MHC class II antigen presentation"/>
</dbReference>
<dbReference type="Reactome" id="R-RNO-2467813">
    <property type="pathway name" value="Separation of Sister Chromatids"/>
</dbReference>
<dbReference type="Reactome" id="R-RNO-2500257">
    <property type="pathway name" value="Resolution of Sister Chromatid Cohesion"/>
</dbReference>
<dbReference type="Reactome" id="R-RNO-2565942">
    <property type="pathway name" value="Regulation of PLK1 Activity at G2/M Transition"/>
</dbReference>
<dbReference type="Reactome" id="R-RNO-3371497">
    <property type="pathway name" value="HSP90 chaperone cycle for steroid hormone receptors (SHR) in the presence of ligand"/>
</dbReference>
<dbReference type="Reactome" id="R-RNO-380259">
    <property type="pathway name" value="Loss of Nlp from mitotic centrosomes"/>
</dbReference>
<dbReference type="Reactome" id="R-RNO-380270">
    <property type="pathway name" value="Recruitment of mitotic centrosome proteins and complexes"/>
</dbReference>
<dbReference type="Reactome" id="R-RNO-380284">
    <property type="pathway name" value="Loss of proteins required for interphase microtubule organization from the centrosome"/>
</dbReference>
<dbReference type="Reactome" id="R-RNO-380320">
    <property type="pathway name" value="Recruitment of NuMA to mitotic centrosomes"/>
</dbReference>
<dbReference type="Reactome" id="R-RNO-5620912">
    <property type="pathway name" value="Anchoring of the basal body to the plasma membrane"/>
</dbReference>
<dbReference type="Reactome" id="R-RNO-5663220">
    <property type="pathway name" value="RHO GTPases Activate Formins"/>
</dbReference>
<dbReference type="Reactome" id="R-RNO-6798695">
    <property type="pathway name" value="Neutrophil degranulation"/>
</dbReference>
<dbReference type="Reactome" id="R-RNO-6807878">
    <property type="pathway name" value="COPI-mediated anterograde transport"/>
</dbReference>
<dbReference type="Reactome" id="R-RNO-6811436">
    <property type="pathway name" value="COPI-independent Golgi-to-ER retrograde traffic"/>
</dbReference>
<dbReference type="Reactome" id="R-RNO-68877">
    <property type="pathway name" value="Mitotic Prometaphase"/>
</dbReference>
<dbReference type="Reactome" id="R-RNO-8854518">
    <property type="pathway name" value="AURKA Activation by TPX2"/>
</dbReference>
<dbReference type="Reactome" id="R-RNO-9646399">
    <property type="pathway name" value="Aggrephagy"/>
</dbReference>
<dbReference type="Reactome" id="R-RNO-9648025">
    <property type="pathway name" value="EML4 and NUDC in mitotic spindle formation"/>
</dbReference>
<dbReference type="PRO" id="PR:P38650"/>
<dbReference type="Proteomes" id="UP000002494">
    <property type="component" value="Unplaced"/>
</dbReference>
<dbReference type="GO" id="GO:0030424">
    <property type="term" value="C:axon"/>
    <property type="evidence" value="ECO:0000314"/>
    <property type="project" value="RGD"/>
</dbReference>
<dbReference type="GO" id="GO:1904115">
    <property type="term" value="C:axon cytoplasm"/>
    <property type="evidence" value="ECO:0007669"/>
    <property type="project" value="GOC"/>
</dbReference>
<dbReference type="GO" id="GO:0005938">
    <property type="term" value="C:cell cortex"/>
    <property type="evidence" value="ECO:0000318"/>
    <property type="project" value="GO_Central"/>
</dbReference>
<dbReference type="GO" id="GO:0005813">
    <property type="term" value="C:centrosome"/>
    <property type="evidence" value="ECO:0000266"/>
    <property type="project" value="RGD"/>
</dbReference>
<dbReference type="GO" id="GO:0005737">
    <property type="term" value="C:cytoplasm"/>
    <property type="evidence" value="ECO:0000266"/>
    <property type="project" value="RGD"/>
</dbReference>
<dbReference type="GO" id="GO:0005868">
    <property type="term" value="C:cytoplasmic dynein complex"/>
    <property type="evidence" value="ECO:0000266"/>
    <property type="project" value="RGD"/>
</dbReference>
<dbReference type="GO" id="GO:0005881">
    <property type="term" value="C:cytoplasmic microtubule"/>
    <property type="evidence" value="ECO:0000318"/>
    <property type="project" value="GO_Central"/>
</dbReference>
<dbReference type="GO" id="GO:0030286">
    <property type="term" value="C:dynein complex"/>
    <property type="evidence" value="ECO:0000266"/>
    <property type="project" value="RGD"/>
</dbReference>
<dbReference type="GO" id="GO:0030175">
    <property type="term" value="C:filopodium"/>
    <property type="evidence" value="ECO:0000266"/>
    <property type="project" value="RGD"/>
</dbReference>
<dbReference type="GO" id="GO:0002177">
    <property type="term" value="C:manchette"/>
    <property type="evidence" value="ECO:0000314"/>
    <property type="project" value="RGD"/>
</dbReference>
<dbReference type="GO" id="GO:0005874">
    <property type="term" value="C:microtubule"/>
    <property type="evidence" value="ECO:0000266"/>
    <property type="project" value="RGD"/>
</dbReference>
<dbReference type="GO" id="GO:0043025">
    <property type="term" value="C:neuronal cell body"/>
    <property type="evidence" value="ECO:0000314"/>
    <property type="project" value="RGD"/>
</dbReference>
<dbReference type="GO" id="GO:0005635">
    <property type="term" value="C:nuclear envelope"/>
    <property type="evidence" value="ECO:0000314"/>
    <property type="project" value="RGD"/>
</dbReference>
<dbReference type="GO" id="GO:0005524">
    <property type="term" value="F:ATP binding"/>
    <property type="evidence" value="ECO:0007669"/>
    <property type="project" value="UniProtKB-KW"/>
</dbReference>
<dbReference type="GO" id="GO:0016887">
    <property type="term" value="F:ATP hydrolysis activity"/>
    <property type="evidence" value="ECO:0007669"/>
    <property type="project" value="InterPro"/>
</dbReference>
<dbReference type="GO" id="GO:0045505">
    <property type="term" value="F:dynein intermediate chain binding"/>
    <property type="evidence" value="ECO:0000318"/>
    <property type="project" value="GO_Central"/>
</dbReference>
<dbReference type="GO" id="GO:0051959">
    <property type="term" value="F:dynein light intermediate chain binding"/>
    <property type="evidence" value="ECO:0000266"/>
    <property type="project" value="RGD"/>
</dbReference>
<dbReference type="GO" id="GO:0042802">
    <property type="term" value="F:identical protein binding"/>
    <property type="evidence" value="ECO:0000266"/>
    <property type="project" value="RGD"/>
</dbReference>
<dbReference type="GO" id="GO:0008569">
    <property type="term" value="F:minus-end-directed microtubule motor activity"/>
    <property type="evidence" value="ECO:0000318"/>
    <property type="project" value="GO_Central"/>
</dbReference>
<dbReference type="GO" id="GO:0051301">
    <property type="term" value="P:cell division"/>
    <property type="evidence" value="ECO:0007669"/>
    <property type="project" value="UniProtKB-KW"/>
</dbReference>
<dbReference type="GO" id="GO:1905243">
    <property type="term" value="P:cellular response to 3,3',5-triiodo-L-thyronine"/>
    <property type="evidence" value="ECO:0000270"/>
    <property type="project" value="RGD"/>
</dbReference>
<dbReference type="GO" id="GO:1990090">
    <property type="term" value="P:cellular response to nerve growth factor stimulus"/>
    <property type="evidence" value="ECO:0000270"/>
    <property type="project" value="RGD"/>
</dbReference>
<dbReference type="GO" id="GO:0031122">
    <property type="term" value="P:cytoplasmic microtubule organization"/>
    <property type="evidence" value="ECO:0000318"/>
    <property type="project" value="GO_Central"/>
</dbReference>
<dbReference type="GO" id="GO:0051293">
    <property type="term" value="P:establishment of spindle localization"/>
    <property type="evidence" value="ECO:0000266"/>
    <property type="project" value="RGD"/>
</dbReference>
<dbReference type="GO" id="GO:0007052">
    <property type="term" value="P:mitotic spindle organization"/>
    <property type="evidence" value="ECO:0000318"/>
    <property type="project" value="GO_Central"/>
</dbReference>
<dbReference type="GO" id="GO:0007097">
    <property type="term" value="P:nuclear migration"/>
    <property type="evidence" value="ECO:0000318"/>
    <property type="project" value="GO_Central"/>
</dbReference>
<dbReference type="GO" id="GO:0033962">
    <property type="term" value="P:P-body assembly"/>
    <property type="evidence" value="ECO:0000266"/>
    <property type="project" value="RGD"/>
</dbReference>
<dbReference type="GO" id="GO:0120162">
    <property type="term" value="P:positive regulation of cold-induced thermogenesis"/>
    <property type="evidence" value="ECO:0000250"/>
    <property type="project" value="YuBioLab"/>
</dbReference>
<dbReference type="GO" id="GO:0032388">
    <property type="term" value="P:positive regulation of intracellular transport"/>
    <property type="evidence" value="ECO:0000250"/>
    <property type="project" value="UniProtKB"/>
</dbReference>
<dbReference type="GO" id="GO:1905832">
    <property type="term" value="P:positive regulation of spindle assembly"/>
    <property type="evidence" value="ECO:0000250"/>
    <property type="project" value="UniProtKB"/>
</dbReference>
<dbReference type="GO" id="GO:0090235">
    <property type="term" value="P:regulation of metaphase plate congression"/>
    <property type="evidence" value="ECO:0000250"/>
    <property type="project" value="UniProtKB"/>
</dbReference>
<dbReference type="GO" id="GO:0060236">
    <property type="term" value="P:regulation of mitotic spindle organization"/>
    <property type="evidence" value="ECO:0000250"/>
    <property type="project" value="UniProtKB"/>
</dbReference>
<dbReference type="GO" id="GO:0008090">
    <property type="term" value="P:retrograde axonal transport"/>
    <property type="evidence" value="ECO:0000318"/>
    <property type="project" value="GO_Central"/>
</dbReference>
<dbReference type="GO" id="GO:0007286">
    <property type="term" value="P:spermatid development"/>
    <property type="evidence" value="ECO:0000270"/>
    <property type="project" value="RGD"/>
</dbReference>
<dbReference type="GO" id="GO:0034063">
    <property type="term" value="P:stress granule assembly"/>
    <property type="evidence" value="ECO:0000266"/>
    <property type="project" value="RGD"/>
</dbReference>
<dbReference type="CDD" id="cd00009">
    <property type="entry name" value="AAA"/>
    <property type="match status" value="2"/>
</dbReference>
<dbReference type="FunFam" id="1.20.920.20:FF:000002">
    <property type="entry name" value="Cytoplasmic dynein 1 heavy chain"/>
    <property type="match status" value="1"/>
</dbReference>
<dbReference type="FunFam" id="3.40.50.300:FF:000122">
    <property type="entry name" value="Cytoplasmic dynein 1 heavy chain"/>
    <property type="match status" value="1"/>
</dbReference>
<dbReference type="FunFam" id="1.20.920.60:FF:000001">
    <property type="entry name" value="Cytoplasmic dynein 1 heavy chain 1"/>
    <property type="match status" value="1"/>
</dbReference>
<dbReference type="FunFam" id="1.10.8.1220:FF:000002">
    <property type="entry name" value="cytoplasmic dynein 1 heavy chain 1-like"/>
    <property type="match status" value="1"/>
</dbReference>
<dbReference type="FunFam" id="1.10.287.2620:FF:000001">
    <property type="entry name" value="Cytoplasmic dynein heavy chain 1"/>
    <property type="match status" value="1"/>
</dbReference>
<dbReference type="FunFam" id="1.10.472.130:FF:000002">
    <property type="entry name" value="Cytoplasmic dynein heavy chain 1"/>
    <property type="match status" value="1"/>
</dbReference>
<dbReference type="FunFam" id="1.10.8.710:FF:000005">
    <property type="entry name" value="Cytoplasmic dynein heavy chain 1"/>
    <property type="match status" value="1"/>
</dbReference>
<dbReference type="FunFam" id="1.20.140.100:FF:000002">
    <property type="entry name" value="Cytoplasmic dynein heavy chain 1"/>
    <property type="match status" value="1"/>
</dbReference>
<dbReference type="FunFam" id="1.20.58.1120:FF:000003">
    <property type="entry name" value="Cytoplasmic dynein heavy chain 1"/>
    <property type="match status" value="1"/>
</dbReference>
<dbReference type="FunFam" id="1.20.920.30:FF:000001">
    <property type="entry name" value="Cytoplasmic dynein heavy chain 1"/>
    <property type="match status" value="1"/>
</dbReference>
<dbReference type="FunFam" id="3.20.180.20:FF:000002">
    <property type="entry name" value="Cytoplasmic dynein heavy chain 1"/>
    <property type="match status" value="1"/>
</dbReference>
<dbReference type="FunFam" id="3.40.50.300:FF:000071">
    <property type="entry name" value="Cytoplasmic dynein heavy chain 1"/>
    <property type="match status" value="1"/>
</dbReference>
<dbReference type="FunFam" id="3.40.50.300:FF:000517">
    <property type="entry name" value="Cytoplasmic dynein heavy chain 1"/>
    <property type="match status" value="1"/>
</dbReference>
<dbReference type="FunFam" id="1.10.8.720:FF:000003">
    <property type="entry name" value="Cytoplasmic dynein heavy chain 2"/>
    <property type="match status" value="1"/>
</dbReference>
<dbReference type="FunFam" id="1.20.1270.280:FF:000004">
    <property type="entry name" value="Cytoplasmic dynein heavy chain 2"/>
    <property type="match status" value="1"/>
</dbReference>
<dbReference type="FunFam" id="3.10.490.20:FF:000004">
    <property type="entry name" value="Cytoplasmic dynein heavy chain 2"/>
    <property type="match status" value="1"/>
</dbReference>
<dbReference type="FunFam" id="3.40.50.300:FF:000373">
    <property type="entry name" value="Cytoplasmic dynein heavy chain 2"/>
    <property type="match status" value="1"/>
</dbReference>
<dbReference type="FunFam" id="3.40.50.300:FF:001956">
    <property type="entry name" value="Dynein cytoplasmic 1 heavy chain 1"/>
    <property type="match status" value="1"/>
</dbReference>
<dbReference type="FunFam" id="3.40.50.300:FF:002655">
    <property type="entry name" value="Dynein cytoplasmic 1 heavy chain 1"/>
    <property type="match status" value="1"/>
</dbReference>
<dbReference type="Gene3D" id="1.10.287.2620">
    <property type="match status" value="1"/>
</dbReference>
<dbReference type="Gene3D" id="1.10.472.130">
    <property type="match status" value="1"/>
</dbReference>
<dbReference type="Gene3D" id="1.10.8.1220">
    <property type="match status" value="1"/>
</dbReference>
<dbReference type="Gene3D" id="1.10.8.710">
    <property type="match status" value="1"/>
</dbReference>
<dbReference type="Gene3D" id="1.20.1270.280">
    <property type="match status" value="1"/>
</dbReference>
<dbReference type="Gene3D" id="1.20.58.1120">
    <property type="match status" value="1"/>
</dbReference>
<dbReference type="Gene3D" id="1.20.920.20">
    <property type="match status" value="2"/>
</dbReference>
<dbReference type="Gene3D" id="1.20.920.30">
    <property type="match status" value="1"/>
</dbReference>
<dbReference type="Gene3D" id="1.20.920.60">
    <property type="match status" value="1"/>
</dbReference>
<dbReference type="Gene3D" id="3.10.490.20">
    <property type="match status" value="1"/>
</dbReference>
<dbReference type="Gene3D" id="6.10.140.1060">
    <property type="match status" value="1"/>
</dbReference>
<dbReference type="Gene3D" id="1.20.140.100">
    <property type="entry name" value="Dynein heavy chain, N-terminal domain 2"/>
    <property type="match status" value="1"/>
</dbReference>
<dbReference type="Gene3D" id="3.20.180.20">
    <property type="entry name" value="Dynein heavy chain, N-terminal domain 2"/>
    <property type="match status" value="1"/>
</dbReference>
<dbReference type="Gene3D" id="3.40.50.300">
    <property type="entry name" value="P-loop containing nucleotide triphosphate hydrolases"/>
    <property type="match status" value="5"/>
</dbReference>
<dbReference type="Gene3D" id="1.10.8.720">
    <property type="entry name" value="Region D6 of dynein motor"/>
    <property type="match status" value="1"/>
</dbReference>
<dbReference type="InterPro" id="IPR003593">
    <property type="entry name" value="AAA+_ATPase"/>
</dbReference>
<dbReference type="InterPro" id="IPR035699">
    <property type="entry name" value="AAA_6"/>
</dbReference>
<dbReference type="InterPro" id="IPR035706">
    <property type="entry name" value="AAA_9"/>
</dbReference>
<dbReference type="InterPro" id="IPR041658">
    <property type="entry name" value="AAA_lid_11"/>
</dbReference>
<dbReference type="InterPro" id="IPR042219">
    <property type="entry name" value="AAA_lid_11_sf"/>
</dbReference>
<dbReference type="InterPro" id="IPR026983">
    <property type="entry name" value="DHC"/>
</dbReference>
<dbReference type="InterPro" id="IPR054354">
    <property type="entry name" value="DYNC2H1-like_lid"/>
</dbReference>
<dbReference type="InterPro" id="IPR042222">
    <property type="entry name" value="Dynein_2_N"/>
</dbReference>
<dbReference type="InterPro" id="IPR043157">
    <property type="entry name" value="Dynein_AAA1S"/>
</dbReference>
<dbReference type="InterPro" id="IPR041466">
    <property type="entry name" value="Dynein_AAA5_ext"/>
</dbReference>
<dbReference type="InterPro" id="IPR041228">
    <property type="entry name" value="Dynein_C"/>
</dbReference>
<dbReference type="InterPro" id="IPR043160">
    <property type="entry name" value="Dynein_C_barrel"/>
</dbReference>
<dbReference type="InterPro" id="IPR024743">
    <property type="entry name" value="Dynein_HC_stalk"/>
</dbReference>
<dbReference type="InterPro" id="IPR024317">
    <property type="entry name" value="Dynein_heavy_chain_D4_dom"/>
</dbReference>
<dbReference type="InterPro" id="IPR004273">
    <property type="entry name" value="Dynein_heavy_D6_P-loop"/>
</dbReference>
<dbReference type="InterPro" id="IPR013602">
    <property type="entry name" value="Dynein_heavy_linker"/>
</dbReference>
<dbReference type="InterPro" id="IPR013594">
    <property type="entry name" value="Dynein_heavy_tail"/>
</dbReference>
<dbReference type="InterPro" id="IPR042228">
    <property type="entry name" value="Dynein_linker_3"/>
</dbReference>
<dbReference type="InterPro" id="IPR027417">
    <property type="entry name" value="P-loop_NTPase"/>
</dbReference>
<dbReference type="PANTHER" id="PTHR46532:SF13">
    <property type="entry name" value="CYTOPLASMIC DYNEIN 1 HEAVY CHAIN 1"/>
    <property type="match status" value="1"/>
</dbReference>
<dbReference type="PANTHER" id="PTHR46532">
    <property type="entry name" value="MALE FERTILITY FACTOR KL5"/>
    <property type="match status" value="1"/>
</dbReference>
<dbReference type="Pfam" id="PF12774">
    <property type="entry name" value="AAA_6"/>
    <property type="match status" value="1"/>
</dbReference>
<dbReference type="Pfam" id="PF12775">
    <property type="entry name" value="AAA_7"/>
    <property type="match status" value="1"/>
</dbReference>
<dbReference type="Pfam" id="PF12780">
    <property type="entry name" value="AAA_8"/>
    <property type="match status" value="1"/>
</dbReference>
<dbReference type="Pfam" id="PF12781">
    <property type="entry name" value="AAA_9"/>
    <property type="match status" value="1"/>
</dbReference>
<dbReference type="Pfam" id="PF18198">
    <property type="entry name" value="AAA_lid_11"/>
    <property type="match status" value="1"/>
</dbReference>
<dbReference type="Pfam" id="PF08385">
    <property type="entry name" value="DHC_N1"/>
    <property type="match status" value="1"/>
</dbReference>
<dbReference type="Pfam" id="PF08393">
    <property type="entry name" value="DHC_N2"/>
    <property type="match status" value="1"/>
</dbReference>
<dbReference type="Pfam" id="PF22597">
    <property type="entry name" value="DYN_lid"/>
    <property type="match status" value="1"/>
</dbReference>
<dbReference type="Pfam" id="PF17852">
    <property type="entry name" value="Dynein_AAA_lid"/>
    <property type="match status" value="1"/>
</dbReference>
<dbReference type="Pfam" id="PF18199">
    <property type="entry name" value="Dynein_C"/>
    <property type="match status" value="1"/>
</dbReference>
<dbReference type="Pfam" id="PF03028">
    <property type="entry name" value="Dynein_heavy"/>
    <property type="match status" value="1"/>
</dbReference>
<dbReference type="Pfam" id="PF12777">
    <property type="entry name" value="MT"/>
    <property type="match status" value="1"/>
</dbReference>
<dbReference type="SMART" id="SM00382">
    <property type="entry name" value="AAA"/>
    <property type="match status" value="4"/>
</dbReference>
<dbReference type="SUPFAM" id="SSF52540">
    <property type="entry name" value="P-loop containing nucleoside triphosphate hydrolases"/>
    <property type="match status" value="4"/>
</dbReference>
<organism>
    <name type="scientific">Rattus norvegicus</name>
    <name type="common">Rat</name>
    <dbReference type="NCBI Taxonomy" id="10116"/>
    <lineage>
        <taxon>Eukaryota</taxon>
        <taxon>Metazoa</taxon>
        <taxon>Chordata</taxon>
        <taxon>Craniata</taxon>
        <taxon>Vertebrata</taxon>
        <taxon>Euteleostomi</taxon>
        <taxon>Mammalia</taxon>
        <taxon>Eutheria</taxon>
        <taxon>Euarchontoglires</taxon>
        <taxon>Glires</taxon>
        <taxon>Rodentia</taxon>
        <taxon>Myomorpha</taxon>
        <taxon>Muroidea</taxon>
        <taxon>Muridae</taxon>
        <taxon>Murinae</taxon>
        <taxon>Rattus</taxon>
    </lineage>
</organism>
<proteinExistence type="evidence at protein level"/>
<gene>
    <name type="primary">Dync1h1</name>
    <name type="synonym">Dhc1</name>
    <name type="synonym">Dnch1</name>
    <name type="synonym">Dnchc1</name>
    <name type="synonym">Dnec1</name>
    <name type="synonym">Dyhc</name>
    <name type="synonym">Map1c</name>
</gene>
<sequence length="4644" mass="532252">MSETGGGEDGSAGLEVSAVQNVADVSVLQKHLRKLVPLLLEDGGDAPAALEAALEEKSALEQMRKFLSDPQVHTVLVERSTLKEDVGDEGEEEKEFISYNINIDIHYGVKSNSLAFIKRAPVIDADKPVSSQLRVLTLSEDSPYETLHSFISNAVAPFFKSYIRESGKADRDGDKMAPSVEKKIAELEMGLLHLQQNIEIPEISLPIHPIITNVAKQCYERGEKPKVTDFGDKVEDPTFLNQLQSGVNRWIREIQKVTKLDRDPASGTALQEISFWLNLERALYRIQEKRESPEVLLTLDILKHGKRFHATVSFDTDTGLKQALETVNDYNPLMKDFPLNDLLSATELDKIRQALVAIFTHLRKIRNTKYPIQRALRLVEAISRDLSSQLLKVLGTRKLMHVAYEEFEKVMVACFEVFQTWDDEYEKLQVLLRDIVKRKREENLKMVWRINPAHRKLQARLDQMRKFRRQHEQLRAVIVRVLRPQVTAVAQQNQGEAPEPQDMKVAEVLFDAADANAIEEVNLAYENVKEVDGLDVSKEGTEAWEAAMKRYDERIDRVETRITARLRDQLGTAKNANEMFRIFSRFNALFVRPHIRGAIREYQTQLIQRVKDDIESLHDKFKVQYPQSQACKMSHVRDLPPVSGSIIWAKQIDRQLTAYMKRVEDVLGKGWENHVEGQKLKQDGDSFRMKLNTQEIFDDWARKVQQRNLGVSGRIFTIESARVRGRSGNVLKLKVNFLPEIITLSKEVRNLKWLGFRVPLAIVNKAHQANQLYPFAISLIESVRTYERTCEKVEERNTISLLVAGLKKEVQALIAEGIALVWESYKLDPYVQRLAETVFNFQEKVDDLLIIEEKIDLEVRSLETCMYDHKTFSEILNRVQKAVDDLNLHSYSNLPIWVNKLDMEIERILGVRLQAGLRAWTQVLLGQAEDKAEVDMDTDAPQVSHKPGGEPKIKNVVHELRITNQVIYLNPPIEECRYKLYQEMFAWKMIVLSLPRIQSQRYQVGVHYELTEEEKFYRNALTRSRDGPVALEESYSAVMGIVTEVEQYVKVWLQYQCLWDMQAENIYNRLGEDLSKWQALLVQIRRARGTFDNAETKKEFGPVVIDYGKVQSKVNLKYDSWHKEVLSKFGQMLGSNMTEFHSQISKSRQELEQHSVDTASTSDAVTFITYVQSLKRKIKQFEKQVELYRNGQRLLEKQRFQFPPSWLYIDNIEGEWGAFNDIMRRKDSAIQQQVANLQMKIVQEDRAVESRTTDLLTDWEKTKPVTGNLRPEEALQALTIYEGKFGRLKDDREKCAKAKEALELTDTGLLSGSEERVQVALEELQDLKGVWSELSKVWEQIDQMKEQPWVSVQPRKLRQNLDGLLNQLKNFPARLRQYASYEFVQRLLKGYMKINMLVIELKSEALKDRHWKQLMKRLHVNWVVSELTLGQIWDVDLQKNEAIVKDVLLVAQGEMALEEFLKQIREVWNTYELDLVNYQNKCRLIRGWDDLFNKVKEHINSVSAMKLSPYYKVFEEDALSWEDKLNRIMALFDVWIDVQRRWVYLEGIFTGSADIKHLLPVETQRFQSISTEFLALMKKVSKSPLVMDVLNIQGVQRSLERLADLLGKIQKALGEYLERERSSFPRFYFVGDEDLLEIIGNSKNVAKLQKHFKKMFAGVSSIILNEDSSVVLGISSREGEEVMFKTPVSITEHPKINEWLTLVEKEMRVTLAKLLAESVTEVEIFGKATSIDPNTYITWIDKYQAQLVVLSAQIAWSENVENALSNVGGGGNVGPLQSVLSNVEVTLNVLADSVLMEQPPLRRRKLEHLITELVHQRDVTRSLIKSKIDNAKSFEWLSQMRFYFDPKQTDVLQQLSIQMANAKFNYGFEYLGVQDKLVQTPLTDRCYLTMTQALEARLGGSPFGPAGTGKTESVKALGHQLGRFVLVFNCDETFDFQAMGRIFVGLCQVGAWGCFDEFNRLEERMLSAVSQQVQCIQEALREHSNPNYDKTSAPITCELLNKQVKVSPDMAIFITMNPGYAGRSNLPDNLKKLFRSLAMTKPDRQLIAQVMLYSQGFRTAEVLANKIVPFFKLCDEQLSSQSHYDFGLRALKSVLVSPGNVKRERIQKIKREKEERGEAVDEGEIAENLPEQEILIQSFCETMVPKLVAEDIPLLFSLLSDVFPGVQYHRGEMTDLREELKKVCKEMYLTYGDGEEVGGMWVEKVLQLYQITQINHGLMMVGPSGSGKSMAWRVLLKALERLEGVEGVAHIIDPKAISKDHLYGTLDPNTREWTDGLFTHVLRKIIDNVRGELQKRQWIVFDGDVDPEWVENLNSVLDDNKLLTLPNGERLSLPPNVRIMFEVQDLKYATLATVSRCGMVWFSEDLLSTDMIFNNFLARLRTIPLDEGEDEAQRRRKGKEDEGEEAASPMLQIQRDAATIMQPYFTSNGLVTKALEHAFKLEHIMDLTRLRCLGSLFSMLHQGCRNVAQYNANHPDFPMQIEQLERYIQRYLVYAILWSLSGDSRLKMRAELGEYIRRITTVPLPTAPNIPIIDYEVSISGEWSPWQAKVPQIEVETHKVAAPDVVVPTLDTVRHEALLYTWLAEHKPLVLCGPPGSGKTMTLFSALRALPDMEVVGLNFSSATTPELLLKTFDHYCEYRRTPNGVVLAPVQLGKWLVLFCDEINLPDMDKYGTQRVISFIRQMVEHGGFYRTSDQTWVKLERIQFVGACNPPTDPGRKPLSHRFLRHVPVVYVDYPGPASLTQIYGTFNRAMLRLIPSLRTYAEPLTAAMVEFYTMSQERFTQDTQPHYIYSPREMTRWVRGIFEALRPLETLPVEGLIRIWAHEALRLFQDRLVEDEERRWTDENIDMVALKHFPNIDKEKAMSRPILYSNWLSKDYIPVDQEELRDYVKARLKVFYEEELDVPLVLFNEVLDHVLRIDRIFRQPQGHLLLIGVSGAGKTTLSRFVAWMNGLSVYQIKVHRKYTGEDFDEDLRTVLRRSGCKNEKIAFIMDESNVLDSGFLERMNTLLANGEVPGLFEGDEYATLMTQCKEGAQKEGLMLDSHEELYKWFTSQVIRNLHVVFTMNPSSEGLKDRAATSPALFNRCVLNWFGDWSTEALYQVGKEFTSKMDLEKPNYIVPDYMPVVYDKLPQPPTHREAIVNSCVFVHQTLHQANARLAKRGGRTMAITPRHYLDFINHYANLFHEKRSELEEQQMHLNVGLRKIKETVDQVEELRRALRIKSQELEVKNAAANDKLKKMVKDQQEAEKKKVMSQEIQEQLHKQQEVIADKQMSVKEDLDKVEPAVIEAQNAVKSIKKQHLVEVRSMANPPAAVKLALESICLLLGESTTDWKQIRSIIMRENFIPTIVNFSAEEISDAIREKMKKNYMSNPSYNYEIVNRASLACGPMVKWAIAQLNYADMLKRVEPLRNELQKLEDDAKDNQQKANEVEQMIRDLEASIARYKEEYAVLISEAQAIKADLAAVEAKVNRSTALLKSLSAERERWEKTSETFKNQMSTIAGDCLLSAAFIAYAGYFDQQMRQNLFTTWSHHLQQANIQFRTDIARTEYLSNADERLRWQASSLPADDLCTENAIMLKRFNRYPLIIDPSGQATEFIMNEYKDRKITRTSFLDDAFRKNLESALRFGNPLLVQDVESYDPVLNPVLNREVRRTGGRVLITLGDQDIDLSPSFVIFLSTRDPTVEFPPDLCSRVTFVNFTVTRSSLQSQCLNEVLKAERPDVDEKRSDLLKLQGEFQLRLRQLEKSLLQALNEVKGRILDDDTIITTLENLKREAAEVTRKVEETDIVMQEVETVSQQYLPLSTACSSIYFTMESLKQVHFLYQYSLQFFLDIYHNVLYENPNLKGATDHTQRLSVITKDLFQVAFNRVARGMLHQDHITFAMLLARIKLKGTMGEPTYDAEFQHFLRGKEIVLSAGSTPKVQGLTVEQAEAVARLSCLPAFKDLIAKVQADEQFGIWLESSSPEQTVPYLWTEETPATPIGQAIHRLLLIQAFRPDRLLAMAHMFVSTNLGESFMSIMEQPLDLTHIVGTEVKPNTPVLMCSVPGYDASGHVEDLAAEQNTQITSIAIGSAEGFNQADKAINTAVKSGRWVMLKNVHLAPGWLMQLEKKLHSLQPHACFRLFLTMEINPRVPVNLLRAGRIFVFEPPPGVKANMLRTFSSIPVSRMCKSPNERARLYFLLAWFHAVIQERLRYAPLGWSKKYEFGESDLRSACDTVDTWLDDTAKGRQNISPDKIPWSALKTLMAQSIYGGRVDNEFDQRLLNTFLERLFTTRSFDSEFKLACKVDGHKDIQMPDGIRREEFVQWVELLPDAQTPSWLGLPNNAERVLLTTQGVDMISKMLKMQMLEDEDDLAYAETEKKTRTDFTSDGRPAWMRTLHTTASNWLHLIPQTLSPLKRTVENIKDPLFRFFEREVKMGAKLLQDVRQDLADVVQVCEGKKKQTNYLRTLINELVKGILPRSWSHYTVPAGMTVIQWVSDFSERIKQLQNISQAAAAGGAKELKNIHVCLGALFVPEAYITATRQYVAQANSWSLEELCLEVNVTASQSTTLDACSFGVTGLKLQGATCSNNKLSLSNAISTVLPLTQLRWGKQTSAEKKASVVTLPVYLNFTRADLIFTVDFEIATKEDPRSFYERGVAVLCTE</sequence>
<evidence type="ECO:0000250" key="1"/>
<evidence type="ECO:0000250" key="2">
    <source>
        <dbReference type="UniProtKB" id="Q14204"/>
    </source>
</evidence>
<evidence type="ECO:0000250" key="3">
    <source>
        <dbReference type="UniProtKB" id="Q9JHU4"/>
    </source>
</evidence>
<evidence type="ECO:0000255" key="4"/>
<evidence type="ECO:0000256" key="5">
    <source>
        <dbReference type="SAM" id="MobiDB-lite"/>
    </source>
</evidence>
<evidence type="ECO:0000269" key="6">
    <source>
    </source>
</evidence>
<evidence type="ECO:0000269" key="7">
    <source>
    </source>
</evidence>
<evidence type="ECO:0000305" key="8"/>
<comment type="function">
    <text evidence="2">Cytoplasmic dynein 1 acts as a motor for the intracellular retrograde motility of vesicles and organelles along microtubules. Dynein has ATPase activity; the force-producing power stroke is thought to occur on release of ADP. Plays a role in mitotic spindle assembly and metaphase plate congression.</text>
</comment>
<comment type="subunit">
    <text evidence="2 3 6 7">Homodimer. The cytoplasmic dynein 1 complex consists of two catalytic heavy chains (HCs) and a number of non-catalytic subunits presented by intermediate chains (ICs), light intermediate chains (LICs) and light chains (LCs); the composition seems to vary in respect to the IC, LIC and LC composition. The heavy chain homodimer serves as a scaffold for the probable homodimeric assembly of the respective non-catalytic subunits. The ICs and LICs bind directly to the HC dimer and dynein LCs assemble on the IC dimer (PubMed:2140361). Interacts with DYNC1LI1; DYNC1LI1 and DYNC1LI2 bind mutually exclusive to DYNC1H1. Interacts with DYNC1LI2; DYNC1LI1 and DYNC1LI2 bind mutually exclusive to DYNC1H1. Interacts with DYNC1I2 (PubMed:10893223). Interacts with BICD2 (By similarity). Interacts with DNALI1 (By similarity).</text>
</comment>
<comment type="subcellular location">
    <subcellularLocation>
        <location>Cytoplasm</location>
        <location>Cytoskeleton</location>
    </subcellularLocation>
</comment>
<comment type="domain">
    <text>Dynein heavy chains probably consist of an N-terminal stem (which binds cargo and interacts with other dynein components), and the head or motor domain. The motor contains six tandemly-linked AAA domains in the head, which form a ring. A stalk-like structure (formed by two of the coiled coil domains) protrudes between AAA 4 and AAA 5 and terminates in a microtubule-binding site. A seventh domain may also contribute to this ring; it is not clear whether the N-terminus or the C-terminus forms this extra domain. There are four well-conserved and two non-conserved ATPase sites, one per AAA domain. Probably only one of these (within AAA 1) actually hydrolyzes ATP, the others may serve a regulatory function.</text>
</comment>
<comment type="similarity">
    <text evidence="8">Belongs to the dynein heavy chain family.</text>
</comment>
<accession>P38650</accession>
<accession>Q63178</accession>
<keyword id="KW-0007">Acetylation</keyword>
<keyword id="KW-0067">ATP-binding</keyword>
<keyword id="KW-0131">Cell cycle</keyword>
<keyword id="KW-0132">Cell division</keyword>
<keyword id="KW-0175">Coiled coil</keyword>
<keyword id="KW-0963">Cytoplasm</keyword>
<keyword id="KW-0206">Cytoskeleton</keyword>
<keyword id="KW-0243">Dynein</keyword>
<keyword id="KW-0493">Microtubule</keyword>
<keyword id="KW-0498">Mitosis</keyword>
<keyword id="KW-0505">Motor protein</keyword>
<keyword id="KW-0547">Nucleotide-binding</keyword>
<keyword id="KW-0597">Phosphoprotein</keyword>
<keyword id="KW-1185">Reference proteome</keyword>
<keyword id="KW-0677">Repeat</keyword>
<keyword id="KW-0813">Transport</keyword>
<feature type="initiator methionine" description="Removed" evidence="2">
    <location>
        <position position="1"/>
    </location>
</feature>
<feature type="chain" id="PRO_0000114629" description="Cytoplasmic dynein 1 heavy chain 1">
    <location>
        <begin position="2"/>
        <end position="4644"/>
    </location>
</feature>
<feature type="region of interest" description="Stem" evidence="1">
    <location>
        <begin position="2"/>
        <end position="1865"/>
    </location>
</feature>
<feature type="region of interest" description="Interaction with DYNC1I2" evidence="6">
    <location>
        <begin position="446"/>
        <end position="701"/>
    </location>
</feature>
<feature type="region of interest" description="Interaction with DYNC1LI2" evidence="6">
    <location>
        <begin position="649"/>
        <end position="800"/>
    </location>
</feature>
<feature type="region of interest" description="AAA 1" evidence="1">
    <location>
        <begin position="1866"/>
        <end position="2097"/>
    </location>
</feature>
<feature type="region of interest" description="AAA 2" evidence="1">
    <location>
        <begin position="2178"/>
        <end position="2450"/>
    </location>
</feature>
<feature type="region of interest" description="Disordered" evidence="5">
    <location>
        <begin position="2389"/>
        <end position="2409"/>
    </location>
</feature>
<feature type="region of interest" description="AAA 3" evidence="1">
    <location>
        <begin position="2554"/>
        <end position="2803"/>
    </location>
</feature>
<feature type="region of interest" description="AAA 4" evidence="1">
    <location>
        <begin position="2897"/>
        <end position="3166"/>
    </location>
</feature>
<feature type="region of interest" description="Stalk" evidence="1">
    <location>
        <begin position="3187"/>
        <end position="3498"/>
    </location>
</feature>
<feature type="region of interest" description="AAA 5" evidence="1">
    <location>
        <begin position="3551"/>
        <end position="3780"/>
    </location>
</feature>
<feature type="region of interest" description="AAA 6" evidence="1">
    <location>
        <begin position="4003"/>
        <end position="4219"/>
    </location>
</feature>
<feature type="coiled-coil region" evidence="4">
    <location>
        <begin position="48"/>
        <end position="69"/>
    </location>
</feature>
<feature type="coiled-coil region" evidence="4">
    <location>
        <begin position="179"/>
        <end position="200"/>
    </location>
</feature>
<feature type="coiled-coil region" evidence="4">
    <location>
        <begin position="453"/>
        <end position="476"/>
    </location>
</feature>
<feature type="coiled-coil region" evidence="4">
    <location>
        <begin position="541"/>
        <end position="564"/>
    </location>
</feature>
<feature type="coiled-coil region" evidence="4">
    <location>
        <begin position="1169"/>
        <end position="1201"/>
    </location>
</feature>
<feature type="coiled-coil region" evidence="4">
    <location>
        <begin position="1229"/>
        <end position="1250"/>
    </location>
</feature>
<feature type="coiled-coil region" evidence="4">
    <location>
        <begin position="1355"/>
        <end position="1371"/>
    </location>
</feature>
<feature type="coiled-coil region" evidence="4">
    <location>
        <begin position="3187"/>
        <end position="3273"/>
    </location>
</feature>
<feature type="coiled-coil region" evidence="4">
    <location>
        <begin position="3394"/>
        <end position="3498"/>
    </location>
</feature>
<feature type="coiled-coil region" evidence="4">
    <location>
        <begin position="3735"/>
        <end position="3798"/>
    </location>
</feature>
<feature type="binding site" evidence="4">
    <location>
        <begin position="1904"/>
        <end position="1911"/>
    </location>
    <ligand>
        <name>ATP</name>
        <dbReference type="ChEBI" id="CHEBI:30616"/>
    </ligand>
</feature>
<feature type="binding site" evidence="4">
    <location>
        <begin position="2222"/>
        <end position="2229"/>
    </location>
    <ligand>
        <name>ATP</name>
        <dbReference type="ChEBI" id="CHEBI:30616"/>
    </ligand>
</feature>
<feature type="binding site" evidence="4">
    <location>
        <begin position="2593"/>
        <end position="2600"/>
    </location>
    <ligand>
        <name>ATP</name>
        <dbReference type="ChEBI" id="CHEBI:30616"/>
    </ligand>
</feature>
<feature type="binding site" evidence="4">
    <location>
        <begin position="2935"/>
        <end position="2942"/>
    </location>
    <ligand>
        <name>ATP</name>
        <dbReference type="ChEBI" id="CHEBI:30616"/>
    </ligand>
</feature>
<feature type="modified residue" description="N-acetylserine" evidence="2">
    <location>
        <position position="2"/>
    </location>
</feature>
<feature type="modified residue" description="Phosphoserine" evidence="2">
    <location>
        <position position="68"/>
    </location>
</feature>
<feature type="modified residue" description="N6-acetyllysine" evidence="2">
    <location>
        <position position="1123"/>
    </location>
</feature>
<feature type="modified residue" description="Phosphoserine" evidence="3">
    <location>
        <position position="1228"/>
    </location>
</feature>
<feature type="modified residue" description="N6-acetyllysine" evidence="2">
    <location>
        <position position="3478"/>
    </location>
</feature>
<feature type="modified residue" description="Phosphoserine" evidence="2">
    <location>
        <position position="4160"/>
    </location>
</feature>
<feature type="modified residue" description="N6-acetyllysine" evidence="2">
    <location>
        <position position="4281"/>
    </location>
</feature>
<feature type="modified residue" description="Phosphothreonine" evidence="2">
    <location>
        <position position="4364"/>
    </location>
</feature>
<feature type="sequence conflict" description="In Ref. 2; AAA41103." evidence="8" ref="2">
    <original>SR</original>
    <variation>MP</variation>
    <location>
        <begin position="1024"/>
        <end position="1025"/>
    </location>
</feature>
<feature type="sequence conflict" description="In Ref. 2; AAA41103." evidence="8" ref="2">
    <original>N</original>
    <variation>D</variation>
    <location>
        <position position="1772"/>
    </location>
</feature>
<feature type="sequence conflict" description="In Ref. 2; AAA41103." evidence="8" ref="2">
    <original>P</original>
    <variation>A</variation>
    <location>
        <position position="2098"/>
    </location>
</feature>
<feature type="sequence conflict" description="In Ref. 2; AAA41103." evidence="8" ref="2">
    <original>F</original>
    <variation>V</variation>
    <location>
        <position position="2139"/>
    </location>
</feature>
<feature type="sequence conflict" description="In Ref. 2; AAA41103." evidence="8" ref="2">
    <original>D</original>
    <variation>A</variation>
    <location>
        <position position="2175"/>
    </location>
</feature>
<feature type="sequence conflict" description="In Ref. 2; AAA41103." evidence="8" ref="2">
    <original>K</original>
    <variation>Q</variation>
    <location>
        <position position="2185"/>
    </location>
</feature>
<feature type="sequence conflict" description="In Ref. 2; AAA41103." evidence="8" ref="2">
    <original>L</original>
    <variation>V</variation>
    <location>
        <position position="2366"/>
    </location>
</feature>
<feature type="sequence conflict" description="In Ref. 2; AAA41103." evidence="8" ref="2">
    <original>T</original>
    <variation>S</variation>
    <location>
        <position position="2382"/>
    </location>
</feature>
<feature type="sequence conflict" description="In Ref. 2; AAA41103." evidence="8" ref="2">
    <original>G</original>
    <variation>A</variation>
    <location>
        <position position="2463"/>
    </location>
</feature>
<feature type="sequence conflict" description="In Ref. 2; AAA41103." evidence="8" ref="2">
    <original>A</original>
    <variation>D</variation>
    <location>
        <position position="3219"/>
    </location>
</feature>
<feature type="sequence conflict" description="In Ref. 2; AAA41103." evidence="8" ref="2">
    <original>R</original>
    <variation>K</variation>
    <location>
        <position position="4131"/>
    </location>
</feature>
<feature type="sequence conflict" description="In Ref. 2; AAA41103." evidence="8" ref="2">
    <original>F</original>
    <variation>S</variation>
    <location>
        <position position="4366"/>
    </location>
</feature>
<feature type="sequence conflict" description="In Ref. 2; AAA41103." evidence="8" ref="2">
    <original>A</original>
    <variation>G</variation>
    <location>
        <position position="4511"/>
    </location>
</feature>